<keyword id="KW-0165">Cleavage on pair of basic residues</keyword>
<keyword id="KW-1015">Disulfide bond</keyword>
<keyword id="KW-0325">Glycoprotein</keyword>
<keyword id="KW-0339">Growth factor</keyword>
<keyword id="KW-0446">Lipid-binding</keyword>
<keyword id="KW-0481">Metalloenzyme inhibitor</keyword>
<keyword id="KW-0483">Metalloprotease inhibitor</keyword>
<keyword id="KW-0646">Protease inhibitor</keyword>
<keyword id="KW-1185">Reference proteome</keyword>
<keyword id="KW-0964">Secreted</keyword>
<keyword id="KW-0732">Signal</keyword>
<keyword id="KW-0800">Toxin</keyword>
<proteinExistence type="evidence at transcript level"/>
<reference key="1">
    <citation type="submission" date="2005-08" db="EMBL/GenBank/DDBJ databases">
        <title>Identification of nerve growth factor as a ubiquitous component of Australian elapid snake venoms.</title>
        <authorList>
            <person name="Earl S.T.H."/>
            <person name="St Pierre L."/>
            <person name="Birrell G.W."/>
            <person name="Wallis T.P."/>
            <person name="Masci P.P."/>
            <person name="de Jersey J."/>
            <person name="Gorman J.J."/>
            <person name="Lavin M.F."/>
        </authorList>
    </citation>
    <scope>NUCLEOTIDE SEQUENCE [MRNA]</scope>
    <source>
        <tissue>Venom gland</tissue>
    </source>
</reference>
<evidence type="ECO:0000250" key="1"/>
<evidence type="ECO:0000250" key="2">
    <source>
        <dbReference type="UniProtKB" id="P61898"/>
    </source>
</evidence>
<evidence type="ECO:0000250" key="3">
    <source>
        <dbReference type="UniProtKB" id="P61899"/>
    </source>
</evidence>
<evidence type="ECO:0000255" key="4"/>
<evidence type="ECO:0000256" key="5">
    <source>
        <dbReference type="SAM" id="MobiDB-lite"/>
    </source>
</evidence>
<evidence type="ECO:0000305" key="6"/>
<protein>
    <recommendedName>
        <fullName>Venom nerve growth factor 1</fullName>
        <shortName>v-NGF-1</shortName>
        <shortName>vNGF-1</shortName>
    </recommendedName>
</protein>
<dbReference type="EMBL" id="DQ181906">
    <property type="protein sequence ID" value="ABA60118.1"/>
    <property type="molecule type" value="mRNA"/>
</dbReference>
<dbReference type="SMR" id="Q3HXY9"/>
<dbReference type="Proteomes" id="UP000472273">
    <property type="component" value="Unplaced"/>
</dbReference>
<dbReference type="GO" id="GO:0030424">
    <property type="term" value="C:axon"/>
    <property type="evidence" value="ECO:0007669"/>
    <property type="project" value="TreeGrafter"/>
</dbReference>
<dbReference type="GO" id="GO:0030425">
    <property type="term" value="C:dendrite"/>
    <property type="evidence" value="ECO:0007669"/>
    <property type="project" value="TreeGrafter"/>
</dbReference>
<dbReference type="GO" id="GO:0005615">
    <property type="term" value="C:extracellular space"/>
    <property type="evidence" value="ECO:0007669"/>
    <property type="project" value="TreeGrafter"/>
</dbReference>
<dbReference type="GO" id="GO:0008021">
    <property type="term" value="C:synaptic vesicle"/>
    <property type="evidence" value="ECO:0007669"/>
    <property type="project" value="TreeGrafter"/>
</dbReference>
<dbReference type="GO" id="GO:0008083">
    <property type="term" value="F:growth factor activity"/>
    <property type="evidence" value="ECO:0007669"/>
    <property type="project" value="UniProtKB-KW"/>
</dbReference>
<dbReference type="GO" id="GO:0008289">
    <property type="term" value="F:lipid binding"/>
    <property type="evidence" value="ECO:0007669"/>
    <property type="project" value="UniProtKB-KW"/>
</dbReference>
<dbReference type="GO" id="GO:0008191">
    <property type="term" value="F:metalloendopeptidase inhibitor activity"/>
    <property type="evidence" value="ECO:0000250"/>
    <property type="project" value="UniProtKB"/>
</dbReference>
<dbReference type="GO" id="GO:0005163">
    <property type="term" value="F:nerve growth factor receptor binding"/>
    <property type="evidence" value="ECO:0007669"/>
    <property type="project" value="TreeGrafter"/>
</dbReference>
<dbReference type="GO" id="GO:0090729">
    <property type="term" value="F:toxin activity"/>
    <property type="evidence" value="ECO:0007669"/>
    <property type="project" value="UniProtKB-KW"/>
</dbReference>
<dbReference type="GO" id="GO:0007169">
    <property type="term" value="P:cell surface receptor protein tyrosine kinase signaling pathway"/>
    <property type="evidence" value="ECO:0007669"/>
    <property type="project" value="TreeGrafter"/>
</dbReference>
<dbReference type="GO" id="GO:0050804">
    <property type="term" value="P:modulation of chemical synaptic transmission"/>
    <property type="evidence" value="ECO:0007669"/>
    <property type="project" value="TreeGrafter"/>
</dbReference>
<dbReference type="GO" id="GO:0043524">
    <property type="term" value="P:negative regulation of neuron apoptotic process"/>
    <property type="evidence" value="ECO:0007669"/>
    <property type="project" value="TreeGrafter"/>
</dbReference>
<dbReference type="GO" id="GO:0021675">
    <property type="term" value="P:nerve development"/>
    <property type="evidence" value="ECO:0007669"/>
    <property type="project" value="TreeGrafter"/>
</dbReference>
<dbReference type="GO" id="GO:0038180">
    <property type="term" value="P:nerve growth factor signaling pathway"/>
    <property type="evidence" value="ECO:0007669"/>
    <property type="project" value="TreeGrafter"/>
</dbReference>
<dbReference type="GO" id="GO:0048812">
    <property type="term" value="P:neuron projection morphogenesis"/>
    <property type="evidence" value="ECO:0007669"/>
    <property type="project" value="TreeGrafter"/>
</dbReference>
<dbReference type="FunFam" id="2.10.90.10:FF:000002">
    <property type="entry name" value="Brain-derived neurotrophic factor"/>
    <property type="match status" value="1"/>
</dbReference>
<dbReference type="Gene3D" id="2.10.90.10">
    <property type="entry name" value="Cystine-knot cytokines"/>
    <property type="match status" value="1"/>
</dbReference>
<dbReference type="InterPro" id="IPR029034">
    <property type="entry name" value="Cystine-knot_cytokine"/>
</dbReference>
<dbReference type="InterPro" id="IPR020408">
    <property type="entry name" value="Nerve_growth_factor-like"/>
</dbReference>
<dbReference type="InterPro" id="IPR002072">
    <property type="entry name" value="Nerve_growth_factor-rel"/>
</dbReference>
<dbReference type="InterPro" id="IPR020425">
    <property type="entry name" value="Nerve_growth_factor_bsu"/>
</dbReference>
<dbReference type="InterPro" id="IPR019846">
    <property type="entry name" value="Nerve_growth_factor_CS"/>
</dbReference>
<dbReference type="InterPro" id="IPR020433">
    <property type="entry name" value="Venom_nerve_growth_factor"/>
</dbReference>
<dbReference type="PANTHER" id="PTHR11589:SF10">
    <property type="entry name" value="BETA-NERVE GROWTH FACTOR"/>
    <property type="match status" value="1"/>
</dbReference>
<dbReference type="PANTHER" id="PTHR11589">
    <property type="entry name" value="NERVE GROWTH FACTOR NGF -RELATED"/>
    <property type="match status" value="1"/>
</dbReference>
<dbReference type="Pfam" id="PF00243">
    <property type="entry name" value="NGF"/>
    <property type="match status" value="1"/>
</dbReference>
<dbReference type="PIRSF" id="PIRSF001789">
    <property type="entry name" value="NGF"/>
    <property type="match status" value="1"/>
</dbReference>
<dbReference type="PRINTS" id="PR00268">
    <property type="entry name" value="NGF"/>
</dbReference>
<dbReference type="PRINTS" id="PR01913">
    <property type="entry name" value="NGFBETA"/>
</dbReference>
<dbReference type="PRINTS" id="PR01917">
    <property type="entry name" value="VENOMNGF"/>
</dbReference>
<dbReference type="SMART" id="SM00140">
    <property type="entry name" value="NGF"/>
    <property type="match status" value="1"/>
</dbReference>
<dbReference type="SUPFAM" id="SSF57501">
    <property type="entry name" value="Cystine-knot cytokines"/>
    <property type="match status" value="1"/>
</dbReference>
<dbReference type="PROSITE" id="PS00248">
    <property type="entry name" value="NGF_1"/>
    <property type="match status" value="1"/>
</dbReference>
<dbReference type="PROSITE" id="PS50270">
    <property type="entry name" value="NGF_2"/>
    <property type="match status" value="1"/>
</dbReference>
<accession>Q3HXY9</accession>
<feature type="signal peptide" evidence="4">
    <location>
        <begin position="1"/>
        <end position="18"/>
    </location>
</feature>
<feature type="propeptide" id="PRO_0000043313" evidence="1">
    <location>
        <begin position="19"/>
        <end position="125"/>
    </location>
</feature>
<feature type="chain" id="PRO_0000043314" description="Venom nerve growth factor 1">
    <location>
        <begin position="126"/>
        <end position="243"/>
    </location>
</feature>
<feature type="region of interest" description="Disordered" evidence="5">
    <location>
        <begin position="47"/>
        <end position="69"/>
    </location>
</feature>
<feature type="compositionally biased region" description="Basic and acidic residues" evidence="5">
    <location>
        <begin position="47"/>
        <end position="66"/>
    </location>
</feature>
<feature type="glycosylation site" description="N-linked (GlcNAc...) asparagine" evidence="4">
    <location>
        <position position="148"/>
    </location>
</feature>
<feature type="disulfide bond" evidence="2">
    <location>
        <begin position="139"/>
        <end position="204"/>
    </location>
</feature>
<feature type="disulfide bond" evidence="2">
    <location>
        <begin position="182"/>
        <end position="232"/>
    </location>
</feature>
<feature type="disulfide bond" evidence="2">
    <location>
        <begin position="192"/>
        <end position="234"/>
    </location>
</feature>
<name>NGFV1_PSETE</name>
<sequence>MSMLCYTLIIAFLIGIWAAPKSEDNVPLGSPATSDLSDTSCAQTHEGLKTSRNTDQRHPAPKKAEDQELGSAANIIVDPKLFQKRRFQSPRVLFSTQPPPLSRDEQSVEFLDNEDTLNRNIRAKRETHPVHNRGEYSVCDSISVWVANKTKAMDIKGKPVTVMVDVNLNNHVYKQYFFETKCRNPNPVPSGCRGIDSRHWNSYCTTTHTFVKALTMEGNRASWRFIRIDTACVCVISRKTENF</sequence>
<comment type="function">
    <text evidence="2 3">Nerve growth factor is important for the development and maintenance of the sympathetic and sensory nervous systems. It stimulates division and differentiation of sympathetic and embryonic sensory neurons as well as basal forebrain cholinergic neurons in the brain. Its relevance in the snake venom is not clear. However, it has been shown to inhibit metalloproteinase-dependent proteolysis of platelet glycoprotein Ib alpha, suggesting a metalloproteinase inhibition to prevent metalloprotease autodigestion and/or protection against prey proteases (By similarity). Binds a lipid between the two protein chains in the homodimer. The lipid-bound form promotes histamine relase from mouse mast cells, contrary to the lipid-free form (By similarity).</text>
</comment>
<comment type="subunit">
    <text evidence="2">Homodimer; non-covalently linked.</text>
</comment>
<comment type="subcellular location">
    <subcellularLocation>
        <location evidence="2">Secreted</location>
    </subcellularLocation>
</comment>
<comment type="tissue specificity">
    <text>Expressed by the venom gland.</text>
</comment>
<comment type="similarity">
    <text evidence="6">Belongs to the NGF-beta family.</text>
</comment>
<organism>
    <name type="scientific">Pseudonaja textilis</name>
    <name type="common">Eastern brown snake</name>
    <dbReference type="NCBI Taxonomy" id="8673"/>
    <lineage>
        <taxon>Eukaryota</taxon>
        <taxon>Metazoa</taxon>
        <taxon>Chordata</taxon>
        <taxon>Craniata</taxon>
        <taxon>Vertebrata</taxon>
        <taxon>Euteleostomi</taxon>
        <taxon>Lepidosauria</taxon>
        <taxon>Squamata</taxon>
        <taxon>Bifurcata</taxon>
        <taxon>Unidentata</taxon>
        <taxon>Episquamata</taxon>
        <taxon>Toxicofera</taxon>
        <taxon>Serpentes</taxon>
        <taxon>Colubroidea</taxon>
        <taxon>Elapidae</taxon>
        <taxon>Hydrophiinae</taxon>
        <taxon>Pseudonaja</taxon>
    </lineage>
</organism>